<sequence length="258" mass="29798">MPVLTMKQLLEAGVHFGHQTRRWNPKMAEYIFTERNGIYIIDLQKTVKKMDEAYEFVKSQVQEGKIILFVGTKKQAQETIKEEAERCGMYYINQRWLGGLLTNFRTIKTRIERLKELQRMEEDGTFDVLPKKEVNLLRKEKERLLKYLGGIQNMPRIPDILYIVDPRKERNAVLEARKLGIPIVAIVDTNCDPDEIDYVIPGNDDAIRAVKLITSKIADAVIEGKEGEQFAPASEQKEEVKTQEVQEVEDSNDDVIDD</sequence>
<feature type="chain" id="PRO_1000003918" description="Small ribosomal subunit protein uS2">
    <location>
        <begin position="1"/>
        <end position="258"/>
    </location>
</feature>
<feature type="region of interest" description="Disordered" evidence="2">
    <location>
        <begin position="227"/>
        <end position="258"/>
    </location>
</feature>
<feature type="compositionally biased region" description="Basic and acidic residues" evidence="2">
    <location>
        <begin position="235"/>
        <end position="244"/>
    </location>
</feature>
<feature type="compositionally biased region" description="Acidic residues" evidence="2">
    <location>
        <begin position="246"/>
        <end position="258"/>
    </location>
</feature>
<accession>A4XM02</accession>
<name>RS2_CALS8</name>
<proteinExistence type="inferred from homology"/>
<keyword id="KW-0687">Ribonucleoprotein</keyword>
<keyword id="KW-0689">Ribosomal protein</keyword>
<evidence type="ECO:0000255" key="1">
    <source>
        <dbReference type="HAMAP-Rule" id="MF_00291"/>
    </source>
</evidence>
<evidence type="ECO:0000256" key="2">
    <source>
        <dbReference type="SAM" id="MobiDB-lite"/>
    </source>
</evidence>
<evidence type="ECO:0000305" key="3"/>
<dbReference type="EMBL" id="CP000679">
    <property type="protein sequence ID" value="ABP67937.1"/>
    <property type="molecule type" value="Genomic_DNA"/>
</dbReference>
<dbReference type="RefSeq" id="WP_011917863.1">
    <property type="nucleotide sequence ID" value="NC_009437.1"/>
</dbReference>
<dbReference type="SMR" id="A4XM02"/>
<dbReference type="STRING" id="351627.Csac_2359"/>
<dbReference type="KEGG" id="csc:Csac_2359"/>
<dbReference type="eggNOG" id="COG0052">
    <property type="taxonomic scope" value="Bacteria"/>
</dbReference>
<dbReference type="HOGENOM" id="CLU_040318_1_2_9"/>
<dbReference type="OrthoDB" id="9808036at2"/>
<dbReference type="Proteomes" id="UP000000256">
    <property type="component" value="Chromosome"/>
</dbReference>
<dbReference type="GO" id="GO:0022627">
    <property type="term" value="C:cytosolic small ribosomal subunit"/>
    <property type="evidence" value="ECO:0007669"/>
    <property type="project" value="TreeGrafter"/>
</dbReference>
<dbReference type="GO" id="GO:0003735">
    <property type="term" value="F:structural constituent of ribosome"/>
    <property type="evidence" value="ECO:0007669"/>
    <property type="project" value="InterPro"/>
</dbReference>
<dbReference type="GO" id="GO:0006412">
    <property type="term" value="P:translation"/>
    <property type="evidence" value="ECO:0007669"/>
    <property type="project" value="UniProtKB-UniRule"/>
</dbReference>
<dbReference type="CDD" id="cd01425">
    <property type="entry name" value="RPS2"/>
    <property type="match status" value="1"/>
</dbReference>
<dbReference type="FunFam" id="1.10.287.610:FF:000001">
    <property type="entry name" value="30S ribosomal protein S2"/>
    <property type="match status" value="1"/>
</dbReference>
<dbReference type="Gene3D" id="3.40.50.10490">
    <property type="entry name" value="Glucose-6-phosphate isomerase like protein, domain 1"/>
    <property type="match status" value="1"/>
</dbReference>
<dbReference type="Gene3D" id="1.10.287.610">
    <property type="entry name" value="Helix hairpin bin"/>
    <property type="match status" value="1"/>
</dbReference>
<dbReference type="HAMAP" id="MF_00291_B">
    <property type="entry name" value="Ribosomal_uS2_B"/>
    <property type="match status" value="1"/>
</dbReference>
<dbReference type="InterPro" id="IPR001865">
    <property type="entry name" value="Ribosomal_uS2"/>
</dbReference>
<dbReference type="InterPro" id="IPR005706">
    <property type="entry name" value="Ribosomal_uS2_bac/mit/plastid"/>
</dbReference>
<dbReference type="InterPro" id="IPR018130">
    <property type="entry name" value="Ribosomal_uS2_CS"/>
</dbReference>
<dbReference type="InterPro" id="IPR023591">
    <property type="entry name" value="Ribosomal_uS2_flav_dom_sf"/>
</dbReference>
<dbReference type="NCBIfam" id="TIGR01011">
    <property type="entry name" value="rpsB_bact"/>
    <property type="match status" value="1"/>
</dbReference>
<dbReference type="PANTHER" id="PTHR12534">
    <property type="entry name" value="30S RIBOSOMAL PROTEIN S2 PROKARYOTIC AND ORGANELLAR"/>
    <property type="match status" value="1"/>
</dbReference>
<dbReference type="PANTHER" id="PTHR12534:SF0">
    <property type="entry name" value="SMALL RIBOSOMAL SUBUNIT PROTEIN US2M"/>
    <property type="match status" value="1"/>
</dbReference>
<dbReference type="Pfam" id="PF00318">
    <property type="entry name" value="Ribosomal_S2"/>
    <property type="match status" value="1"/>
</dbReference>
<dbReference type="PRINTS" id="PR00395">
    <property type="entry name" value="RIBOSOMALS2"/>
</dbReference>
<dbReference type="SUPFAM" id="SSF52313">
    <property type="entry name" value="Ribosomal protein S2"/>
    <property type="match status" value="1"/>
</dbReference>
<dbReference type="PROSITE" id="PS00962">
    <property type="entry name" value="RIBOSOMAL_S2_1"/>
    <property type="match status" value="1"/>
</dbReference>
<protein>
    <recommendedName>
        <fullName evidence="1">Small ribosomal subunit protein uS2</fullName>
    </recommendedName>
    <alternativeName>
        <fullName evidence="3">30S ribosomal protein S2</fullName>
    </alternativeName>
</protein>
<reference key="1">
    <citation type="submission" date="2007-04" db="EMBL/GenBank/DDBJ databases">
        <title>Genome sequence of the thermophilic hydrogen-producing bacterium Caldicellulosiruptor saccharolyticus DSM 8903.</title>
        <authorList>
            <person name="Copeland A."/>
            <person name="Lucas S."/>
            <person name="Lapidus A."/>
            <person name="Barry K."/>
            <person name="Detter J.C."/>
            <person name="Glavina del Rio T."/>
            <person name="Hammon N."/>
            <person name="Israni S."/>
            <person name="Dalin E."/>
            <person name="Tice H."/>
            <person name="Pitluck S."/>
            <person name="Kiss H."/>
            <person name="Brettin T."/>
            <person name="Bruce D."/>
            <person name="Han C."/>
            <person name="Schmutz J."/>
            <person name="Larimer F."/>
            <person name="Land M."/>
            <person name="Hauser L."/>
            <person name="Kyrpides N."/>
            <person name="Lykidis A."/>
            <person name="van de Werken H.J.G."/>
            <person name="Verhaart M.R.A."/>
            <person name="VanFossen A.L."/>
            <person name="Lewis D.L."/>
            <person name="Nichols J.D."/>
            <person name="Goorissen H.P."/>
            <person name="van Niel E.W.J."/>
            <person name="Stams F.J.M."/>
            <person name="Willquist K.U."/>
            <person name="Ward D.E."/>
            <person name="van der Oost J."/>
            <person name="Kelly R.M."/>
            <person name="Kengen S.M.W."/>
            <person name="Richardson P."/>
        </authorList>
    </citation>
    <scope>NUCLEOTIDE SEQUENCE [LARGE SCALE GENOMIC DNA]</scope>
    <source>
        <strain>ATCC 43494 / DSM 8903 / Tp8T 6331</strain>
    </source>
</reference>
<organism>
    <name type="scientific">Caldicellulosiruptor saccharolyticus (strain ATCC 43494 / DSM 8903 / Tp8T 6331)</name>
    <dbReference type="NCBI Taxonomy" id="351627"/>
    <lineage>
        <taxon>Bacteria</taxon>
        <taxon>Bacillati</taxon>
        <taxon>Bacillota</taxon>
        <taxon>Bacillota incertae sedis</taxon>
        <taxon>Caldicellulosiruptorales</taxon>
        <taxon>Caldicellulosiruptoraceae</taxon>
        <taxon>Caldicellulosiruptor</taxon>
    </lineage>
</organism>
<comment type="similarity">
    <text evidence="1">Belongs to the universal ribosomal protein uS2 family.</text>
</comment>
<gene>
    <name evidence="1" type="primary">rpsB</name>
    <name type="ordered locus">Csac_2359</name>
</gene>